<dbReference type="EMBL" id="CP000505">
    <property type="protein sequence ID" value="ABL77750.1"/>
    <property type="status" value="ALT_INIT"/>
    <property type="molecule type" value="Genomic_DNA"/>
</dbReference>
<dbReference type="SMR" id="A1RX20"/>
<dbReference type="STRING" id="368408.Tpen_0341"/>
<dbReference type="EnsemblBacteria" id="ABL77750">
    <property type="protein sequence ID" value="ABL77750"/>
    <property type="gene ID" value="Tpen_0341"/>
</dbReference>
<dbReference type="KEGG" id="tpe:Tpen_0341"/>
<dbReference type="eggNOG" id="arCOG00865">
    <property type="taxonomic scope" value="Archaea"/>
</dbReference>
<dbReference type="HOGENOM" id="CLU_022916_0_0_2"/>
<dbReference type="OrthoDB" id="32941at2157"/>
<dbReference type="Proteomes" id="UP000000641">
    <property type="component" value="Chromosome"/>
</dbReference>
<dbReference type="GO" id="GO:0005886">
    <property type="term" value="C:plasma membrane"/>
    <property type="evidence" value="ECO:0007669"/>
    <property type="project" value="UniProtKB-SubCell"/>
</dbReference>
<dbReference type="GO" id="GO:0005524">
    <property type="term" value="F:ATP binding"/>
    <property type="evidence" value="ECO:0007669"/>
    <property type="project" value="UniProtKB-UniRule"/>
</dbReference>
<dbReference type="GO" id="GO:0046933">
    <property type="term" value="F:proton-transporting ATP synthase activity, rotational mechanism"/>
    <property type="evidence" value="ECO:0007669"/>
    <property type="project" value="UniProtKB-UniRule"/>
</dbReference>
<dbReference type="GO" id="GO:0046961">
    <property type="term" value="F:proton-transporting ATPase activity, rotational mechanism"/>
    <property type="evidence" value="ECO:0007669"/>
    <property type="project" value="TreeGrafter"/>
</dbReference>
<dbReference type="GO" id="GO:0042777">
    <property type="term" value="P:proton motive force-driven plasma membrane ATP synthesis"/>
    <property type="evidence" value="ECO:0007669"/>
    <property type="project" value="UniProtKB-UniRule"/>
</dbReference>
<dbReference type="CDD" id="cd18112">
    <property type="entry name" value="ATP-synt_V_A-type_beta_C"/>
    <property type="match status" value="1"/>
</dbReference>
<dbReference type="CDD" id="cd18118">
    <property type="entry name" value="ATP-synt_V_A-type_beta_N"/>
    <property type="match status" value="1"/>
</dbReference>
<dbReference type="CDD" id="cd01135">
    <property type="entry name" value="V_A-ATPase_B"/>
    <property type="match status" value="1"/>
</dbReference>
<dbReference type="Gene3D" id="3.40.50.12240">
    <property type="match status" value="1"/>
</dbReference>
<dbReference type="HAMAP" id="MF_00310">
    <property type="entry name" value="ATP_synth_B_arch"/>
    <property type="match status" value="1"/>
</dbReference>
<dbReference type="InterPro" id="IPR055190">
    <property type="entry name" value="ATP-synt_VA_C"/>
</dbReference>
<dbReference type="InterPro" id="IPR020003">
    <property type="entry name" value="ATPase_a/bsu_AS"/>
</dbReference>
<dbReference type="InterPro" id="IPR004100">
    <property type="entry name" value="ATPase_F1/V1/A1_a/bsu_N"/>
</dbReference>
<dbReference type="InterPro" id="IPR000194">
    <property type="entry name" value="ATPase_F1/V1/A1_a/bsu_nucl-bd"/>
</dbReference>
<dbReference type="InterPro" id="IPR027417">
    <property type="entry name" value="P-loop_NTPase"/>
</dbReference>
<dbReference type="InterPro" id="IPR022879">
    <property type="entry name" value="V-ATPase_su_B/beta"/>
</dbReference>
<dbReference type="NCBIfam" id="NF003235">
    <property type="entry name" value="PRK04196.1"/>
    <property type="match status" value="1"/>
</dbReference>
<dbReference type="PANTHER" id="PTHR43389">
    <property type="entry name" value="V-TYPE PROTON ATPASE SUBUNIT B"/>
    <property type="match status" value="1"/>
</dbReference>
<dbReference type="PANTHER" id="PTHR43389:SF4">
    <property type="entry name" value="V-TYPE PROTON ATPASE SUBUNIT B"/>
    <property type="match status" value="1"/>
</dbReference>
<dbReference type="Pfam" id="PF00006">
    <property type="entry name" value="ATP-synt_ab"/>
    <property type="match status" value="1"/>
</dbReference>
<dbReference type="Pfam" id="PF02874">
    <property type="entry name" value="ATP-synt_ab_N"/>
    <property type="match status" value="1"/>
</dbReference>
<dbReference type="Pfam" id="PF22919">
    <property type="entry name" value="ATP-synt_VA_C"/>
    <property type="match status" value="1"/>
</dbReference>
<dbReference type="SUPFAM" id="SSF52540">
    <property type="entry name" value="P-loop containing nucleoside triphosphate hydrolases"/>
    <property type="match status" value="1"/>
</dbReference>
<dbReference type="PROSITE" id="PS00152">
    <property type="entry name" value="ATPASE_ALPHA_BETA"/>
    <property type="match status" value="1"/>
</dbReference>
<organism>
    <name type="scientific">Thermofilum pendens (strain DSM 2475 / Hrk 5)</name>
    <dbReference type="NCBI Taxonomy" id="368408"/>
    <lineage>
        <taxon>Archaea</taxon>
        <taxon>Thermoproteota</taxon>
        <taxon>Thermoprotei</taxon>
        <taxon>Thermofilales</taxon>
        <taxon>Thermofilaceae</taxon>
        <taxon>Thermofilum</taxon>
    </lineage>
</organism>
<sequence>MYPGKVYRGVKEIRGSLLIVDGIEEAAYDEVVKIYGKDSRERFGRVLETSIGQAVVQVLGDREGLETDTLLKFTGSTFKIRVSEDVIGRVFNGRFEPIDGLPPILSGELREITGEPINPISREYPHDFIQTGVSAIDGLFSMVRGQKLPIFSVSGLPHNLLAAQVARQATVRGEGEQFAVVFAGIGLRKTEAEFFLEQFRETGAIERLVAVLNMADDPAVERLMTPRIALTVAEYLAFDLDMHVLVIMSDMTNYCEALREVSSARGEIPGRLGYPGYMYSDLATIYERAGVIKGKKGSITLFPILTMPGGDLRHPIPDLTGYITEGQIFLSQEMYAQGIYPPINILPSLSRLMKSGIGPGKTREDHRYLADQLYDAYSRGVKARDLARIIGEIGLSERNRRFLKFAEEFENKFVNQGFYENRSIEETLDLGWQVLSILPEEELVRIPQKIIEKYHPKYRS</sequence>
<gene>
    <name evidence="1" type="primary">atpB</name>
    <name type="ordered locus">Tpen_0341</name>
</gene>
<accession>A1RX20</accession>
<keyword id="KW-0066">ATP synthesis</keyword>
<keyword id="KW-1003">Cell membrane</keyword>
<keyword id="KW-0375">Hydrogen ion transport</keyword>
<keyword id="KW-0406">Ion transport</keyword>
<keyword id="KW-0472">Membrane</keyword>
<keyword id="KW-1185">Reference proteome</keyword>
<keyword id="KW-0813">Transport</keyword>
<feature type="chain" id="PRO_0000322508" description="A-type ATP synthase subunit B">
    <location>
        <begin position="1"/>
        <end position="460"/>
    </location>
</feature>
<protein>
    <recommendedName>
        <fullName evidence="1">A-type ATP synthase subunit B</fullName>
    </recommendedName>
</protein>
<reference key="1">
    <citation type="journal article" date="2008" name="J. Bacteriol.">
        <title>Genome sequence of Thermofilum pendens reveals an exceptional loss of biosynthetic pathways without genome reduction.</title>
        <authorList>
            <person name="Anderson I."/>
            <person name="Rodriguez J."/>
            <person name="Susanti D."/>
            <person name="Porat I."/>
            <person name="Reich C."/>
            <person name="Ulrich L.E."/>
            <person name="Elkins J.G."/>
            <person name="Mavromatis K."/>
            <person name="Lykidis A."/>
            <person name="Kim E."/>
            <person name="Thompson L.S."/>
            <person name="Nolan M."/>
            <person name="Land M."/>
            <person name="Copeland A."/>
            <person name="Lapidus A."/>
            <person name="Lucas S."/>
            <person name="Detter C."/>
            <person name="Zhulin I.B."/>
            <person name="Olsen G.J."/>
            <person name="Whitman W."/>
            <person name="Mukhopadhyay B."/>
            <person name="Bristow J."/>
            <person name="Kyrpides N."/>
        </authorList>
    </citation>
    <scope>NUCLEOTIDE SEQUENCE [LARGE SCALE GENOMIC DNA]</scope>
    <source>
        <strain>DSM 2475 / Hrk 5</strain>
    </source>
</reference>
<comment type="function">
    <text evidence="1">Component of the A-type ATP synthase that produces ATP from ADP in the presence of a proton gradient across the membrane. The B chain is a regulatory subunit.</text>
</comment>
<comment type="subunit">
    <text evidence="1">Has multiple subunits with at least A(3), B(3), C, D, E, F, H, I and proteolipid K(x).</text>
</comment>
<comment type="subcellular location">
    <subcellularLocation>
        <location evidence="1">Cell membrane</location>
        <topology evidence="1">Peripheral membrane protein</topology>
    </subcellularLocation>
</comment>
<comment type="similarity">
    <text evidence="1">Belongs to the ATPase alpha/beta chains family.</text>
</comment>
<comment type="sequence caution" evidence="2">
    <conflict type="erroneous initiation">
        <sequence resource="EMBL-CDS" id="ABL77750"/>
    </conflict>
</comment>
<evidence type="ECO:0000255" key="1">
    <source>
        <dbReference type="HAMAP-Rule" id="MF_00310"/>
    </source>
</evidence>
<evidence type="ECO:0000305" key="2"/>
<proteinExistence type="inferred from homology"/>
<name>AATB_THEPD</name>